<protein>
    <recommendedName>
        <fullName evidence="12">Betaine-homocysteine S-methyltransferase</fullName>
        <ecNumber evidence="1">2.1.1.5</ecNumber>
    </recommendedName>
</protein>
<proteinExistence type="evidence at transcript level"/>
<dbReference type="EC" id="2.1.1.5" evidence="1"/>
<dbReference type="EMBL" id="AE014134">
    <property type="protein sequence ID" value="AAF53726.1"/>
    <property type="molecule type" value="Genomic_DNA"/>
</dbReference>
<dbReference type="EMBL" id="AE014134">
    <property type="protein sequence ID" value="AHN54587.1"/>
    <property type="molecule type" value="Genomic_DNA"/>
</dbReference>
<dbReference type="EMBL" id="AE014134">
    <property type="protein sequence ID" value="AHN54588.1"/>
    <property type="molecule type" value="Genomic_DNA"/>
</dbReference>
<dbReference type="EMBL" id="AM294641">
    <property type="protein sequence ID" value="CAL25775.1"/>
    <property type="molecule type" value="Genomic_DNA"/>
</dbReference>
<dbReference type="EMBL" id="AM294643">
    <property type="protein sequence ID" value="CAL25777.1"/>
    <property type="molecule type" value="Genomic_DNA"/>
</dbReference>
<dbReference type="EMBL" id="AM294645">
    <property type="protein sequence ID" value="CAL25779.1"/>
    <property type="molecule type" value="Genomic_DNA"/>
</dbReference>
<dbReference type="EMBL" id="AM294646">
    <property type="protein sequence ID" value="CAL25780.1"/>
    <property type="molecule type" value="Genomic_DNA"/>
</dbReference>
<dbReference type="EMBL" id="FM245789">
    <property type="protein sequence ID" value="CAR93715.1"/>
    <property type="molecule type" value="Genomic_DNA"/>
</dbReference>
<dbReference type="EMBL" id="FM245791">
    <property type="protein sequence ID" value="CAR93717.1"/>
    <property type="molecule type" value="Genomic_DNA"/>
</dbReference>
<dbReference type="EMBL" id="AY118872">
    <property type="protein sequence ID" value="AAM50732.1"/>
    <property type="molecule type" value="mRNA"/>
</dbReference>
<dbReference type="RefSeq" id="NP_001286073.1">
    <property type="nucleotide sequence ID" value="NM_001299144.1"/>
</dbReference>
<dbReference type="RefSeq" id="NP_001286074.1">
    <property type="nucleotide sequence ID" value="NM_001299145.1"/>
</dbReference>
<dbReference type="RefSeq" id="NP_609921.1">
    <property type="nucleotide sequence ID" value="NM_136077.2"/>
</dbReference>
<dbReference type="SMR" id="Q9VJ31"/>
<dbReference type="FunCoup" id="Q9VJ31">
    <property type="interactions" value="76"/>
</dbReference>
<dbReference type="IntAct" id="Q9VJ31">
    <property type="interactions" value="6"/>
</dbReference>
<dbReference type="STRING" id="7227.FBpp0311160"/>
<dbReference type="PaxDb" id="7227-FBpp0080731"/>
<dbReference type="DNASU" id="35153"/>
<dbReference type="EnsemblMetazoa" id="FBtr0081190">
    <property type="protein sequence ID" value="FBpp0080731"/>
    <property type="gene ID" value="FBgn0032727"/>
</dbReference>
<dbReference type="EnsemblMetazoa" id="FBtr0344844">
    <property type="protein sequence ID" value="FBpp0311159"/>
    <property type="gene ID" value="FBgn0032727"/>
</dbReference>
<dbReference type="EnsemblMetazoa" id="FBtr0344845">
    <property type="protein sequence ID" value="FBpp0311160"/>
    <property type="gene ID" value="FBgn0032727"/>
</dbReference>
<dbReference type="GeneID" id="35153"/>
<dbReference type="KEGG" id="dme:Dmel_CG10623"/>
<dbReference type="UCSC" id="CG10623-RA">
    <property type="organism name" value="d. melanogaster"/>
</dbReference>
<dbReference type="AGR" id="FB:FBgn0032727"/>
<dbReference type="CTD" id="635"/>
<dbReference type="FlyBase" id="FBgn0032727">
    <property type="gene designation" value="Bhmt"/>
</dbReference>
<dbReference type="VEuPathDB" id="VectorBase:FBgn0032727"/>
<dbReference type="eggNOG" id="KOG1579">
    <property type="taxonomic scope" value="Eukaryota"/>
</dbReference>
<dbReference type="GeneTree" id="ENSGT00510000049619"/>
<dbReference type="HOGENOM" id="CLU_004914_3_2_1"/>
<dbReference type="OMA" id="CSQPEVI"/>
<dbReference type="OrthoDB" id="261426at2759"/>
<dbReference type="UniPathway" id="UPA00051"/>
<dbReference type="BioGRID-ORCS" id="35153">
    <property type="hits" value="0 hits in 3 CRISPR screens"/>
</dbReference>
<dbReference type="Proteomes" id="UP000000803">
    <property type="component" value="Chromosome 2L"/>
</dbReference>
<dbReference type="Bgee" id="FBgn0032727">
    <property type="expression patterns" value="Expressed in saliva-secreting gland and 94 other cell types or tissues"/>
</dbReference>
<dbReference type="ExpressionAtlas" id="Q9VJ31">
    <property type="expression patterns" value="baseline and differential"/>
</dbReference>
<dbReference type="GO" id="GO:0047150">
    <property type="term" value="F:betaine-homocysteine S-methyltransferase activity"/>
    <property type="evidence" value="ECO:0000250"/>
    <property type="project" value="FlyBase"/>
</dbReference>
<dbReference type="GO" id="GO:0008898">
    <property type="term" value="F:S-adenosylmethionine-homocysteine S-methyltransferase activity"/>
    <property type="evidence" value="ECO:0000318"/>
    <property type="project" value="GO_Central"/>
</dbReference>
<dbReference type="GO" id="GO:0061627">
    <property type="term" value="F:S-methylmethionine-homocysteine S-methyltransferase activity"/>
    <property type="evidence" value="ECO:0000250"/>
    <property type="project" value="FlyBase"/>
</dbReference>
<dbReference type="GO" id="GO:0008270">
    <property type="term" value="F:zinc ion binding"/>
    <property type="evidence" value="ECO:0007669"/>
    <property type="project" value="InterPro"/>
</dbReference>
<dbReference type="GO" id="GO:0009086">
    <property type="term" value="P:methionine biosynthetic process"/>
    <property type="evidence" value="ECO:0000318"/>
    <property type="project" value="GO_Central"/>
</dbReference>
<dbReference type="GO" id="GO:0032259">
    <property type="term" value="P:methylation"/>
    <property type="evidence" value="ECO:0007669"/>
    <property type="project" value="UniProtKB-KW"/>
</dbReference>
<dbReference type="GO" id="GO:0033528">
    <property type="term" value="P:S-methylmethionine cycle"/>
    <property type="evidence" value="ECO:0000318"/>
    <property type="project" value="GO_Central"/>
</dbReference>
<dbReference type="FunFam" id="3.20.20.330:FF:000002">
    <property type="entry name" value="Homocysteine S-methyltransferase"/>
    <property type="match status" value="1"/>
</dbReference>
<dbReference type="Gene3D" id="3.20.20.330">
    <property type="entry name" value="Homocysteine-binding-like domain"/>
    <property type="match status" value="1"/>
</dbReference>
<dbReference type="InterPro" id="IPR017226">
    <property type="entry name" value="Betaine-hCys_S-MeTrfase_BHMT"/>
</dbReference>
<dbReference type="InterPro" id="IPR003726">
    <property type="entry name" value="HCY_dom"/>
</dbReference>
<dbReference type="InterPro" id="IPR036589">
    <property type="entry name" value="HCY_dom_sf"/>
</dbReference>
<dbReference type="InterPro" id="IPR051486">
    <property type="entry name" value="Hcy_S-methyltransferase"/>
</dbReference>
<dbReference type="NCBIfam" id="NF007020">
    <property type="entry name" value="PRK09485.1"/>
    <property type="match status" value="1"/>
</dbReference>
<dbReference type="PANTHER" id="PTHR46015:SF1">
    <property type="entry name" value="HOMOCYSTEINE S-METHYLTRANSFERASE-LIKE ISOFORM 1"/>
    <property type="match status" value="1"/>
</dbReference>
<dbReference type="PANTHER" id="PTHR46015">
    <property type="entry name" value="ZGC:172121"/>
    <property type="match status" value="1"/>
</dbReference>
<dbReference type="Pfam" id="PF02574">
    <property type="entry name" value="S-methyl_trans"/>
    <property type="match status" value="1"/>
</dbReference>
<dbReference type="PIRSF" id="PIRSF037505">
    <property type="entry name" value="Betaine_HMT"/>
    <property type="match status" value="1"/>
</dbReference>
<dbReference type="SUPFAM" id="SSF82282">
    <property type="entry name" value="Homocysteine S-methyltransferase"/>
    <property type="match status" value="1"/>
</dbReference>
<dbReference type="PROSITE" id="PS50970">
    <property type="entry name" value="HCY"/>
    <property type="match status" value="1"/>
</dbReference>
<feature type="chain" id="PRO_0000461871" description="Betaine-homocysteine S-methyltransferase">
    <location>
        <begin position="1"/>
        <end position="331"/>
    </location>
</feature>
<feature type="domain" description="Hcy-binding" evidence="2">
    <location>
        <begin position="3"/>
        <end position="324"/>
    </location>
</feature>
<feature type="binding site" evidence="2">
    <location>
        <position position="243"/>
    </location>
    <ligand>
        <name>Zn(2+)</name>
        <dbReference type="ChEBI" id="CHEBI:29105"/>
    </ligand>
</feature>
<feature type="binding site" evidence="2">
    <location>
        <position position="309"/>
    </location>
    <ligand>
        <name>Zn(2+)</name>
        <dbReference type="ChEBI" id="CHEBI:29105"/>
    </ligand>
</feature>
<feature type="binding site" evidence="2">
    <location>
        <position position="310"/>
    </location>
    <ligand>
        <name>Zn(2+)</name>
        <dbReference type="ChEBI" id="CHEBI:29105"/>
    </ligand>
</feature>
<accession>Q9VJ31</accession>
<reference evidence="13" key="1">
    <citation type="journal article" date="2000" name="Science">
        <title>The genome sequence of Drosophila melanogaster.</title>
        <authorList>
            <person name="Adams M.D."/>
            <person name="Celniker S.E."/>
            <person name="Holt R.A."/>
            <person name="Evans C.A."/>
            <person name="Gocayne J.D."/>
            <person name="Amanatides P.G."/>
            <person name="Scherer S.E."/>
            <person name="Li P.W."/>
            <person name="Hoskins R.A."/>
            <person name="Galle R.F."/>
            <person name="George R.A."/>
            <person name="Lewis S.E."/>
            <person name="Richards S."/>
            <person name="Ashburner M."/>
            <person name="Henderson S.N."/>
            <person name="Sutton G.G."/>
            <person name="Wortman J.R."/>
            <person name="Yandell M.D."/>
            <person name="Zhang Q."/>
            <person name="Chen L.X."/>
            <person name="Brandon R.C."/>
            <person name="Rogers Y.-H.C."/>
            <person name="Blazej R.G."/>
            <person name="Champe M."/>
            <person name="Pfeiffer B.D."/>
            <person name="Wan K.H."/>
            <person name="Doyle C."/>
            <person name="Baxter E.G."/>
            <person name="Helt G."/>
            <person name="Nelson C.R."/>
            <person name="Miklos G.L.G."/>
            <person name="Abril J.F."/>
            <person name="Agbayani A."/>
            <person name="An H.-J."/>
            <person name="Andrews-Pfannkoch C."/>
            <person name="Baldwin D."/>
            <person name="Ballew R.M."/>
            <person name="Basu A."/>
            <person name="Baxendale J."/>
            <person name="Bayraktaroglu L."/>
            <person name="Beasley E.M."/>
            <person name="Beeson K.Y."/>
            <person name="Benos P.V."/>
            <person name="Berman B.P."/>
            <person name="Bhandari D."/>
            <person name="Bolshakov S."/>
            <person name="Borkova D."/>
            <person name="Botchan M.R."/>
            <person name="Bouck J."/>
            <person name="Brokstein P."/>
            <person name="Brottier P."/>
            <person name="Burtis K.C."/>
            <person name="Busam D.A."/>
            <person name="Butler H."/>
            <person name="Cadieu E."/>
            <person name="Center A."/>
            <person name="Chandra I."/>
            <person name="Cherry J.M."/>
            <person name="Cawley S."/>
            <person name="Dahlke C."/>
            <person name="Davenport L.B."/>
            <person name="Davies P."/>
            <person name="de Pablos B."/>
            <person name="Delcher A."/>
            <person name="Deng Z."/>
            <person name="Mays A.D."/>
            <person name="Dew I."/>
            <person name="Dietz S.M."/>
            <person name="Dodson K."/>
            <person name="Doup L.E."/>
            <person name="Downes M."/>
            <person name="Dugan-Rocha S."/>
            <person name="Dunkov B.C."/>
            <person name="Dunn P."/>
            <person name="Durbin K.J."/>
            <person name="Evangelista C.C."/>
            <person name="Ferraz C."/>
            <person name="Ferriera S."/>
            <person name="Fleischmann W."/>
            <person name="Fosler C."/>
            <person name="Gabrielian A.E."/>
            <person name="Garg N.S."/>
            <person name="Gelbart W.M."/>
            <person name="Glasser K."/>
            <person name="Glodek A."/>
            <person name="Gong F."/>
            <person name="Gorrell J.H."/>
            <person name="Gu Z."/>
            <person name="Guan P."/>
            <person name="Harris M."/>
            <person name="Harris N.L."/>
            <person name="Harvey D.A."/>
            <person name="Heiman T.J."/>
            <person name="Hernandez J.R."/>
            <person name="Houck J."/>
            <person name="Hostin D."/>
            <person name="Houston K.A."/>
            <person name="Howland T.J."/>
            <person name="Wei M.-H."/>
            <person name="Ibegwam C."/>
            <person name="Jalali M."/>
            <person name="Kalush F."/>
            <person name="Karpen G.H."/>
            <person name="Ke Z."/>
            <person name="Kennison J.A."/>
            <person name="Ketchum K.A."/>
            <person name="Kimmel B.E."/>
            <person name="Kodira C.D."/>
            <person name="Kraft C.L."/>
            <person name="Kravitz S."/>
            <person name="Kulp D."/>
            <person name="Lai Z."/>
            <person name="Lasko P."/>
            <person name="Lei Y."/>
            <person name="Levitsky A.A."/>
            <person name="Li J.H."/>
            <person name="Li Z."/>
            <person name="Liang Y."/>
            <person name="Lin X."/>
            <person name="Liu X."/>
            <person name="Mattei B."/>
            <person name="McIntosh T.C."/>
            <person name="McLeod M.P."/>
            <person name="McPherson D."/>
            <person name="Merkulov G."/>
            <person name="Milshina N.V."/>
            <person name="Mobarry C."/>
            <person name="Morris J."/>
            <person name="Moshrefi A."/>
            <person name="Mount S.M."/>
            <person name="Moy M."/>
            <person name="Murphy B."/>
            <person name="Murphy L."/>
            <person name="Muzny D.M."/>
            <person name="Nelson D.L."/>
            <person name="Nelson D.R."/>
            <person name="Nelson K.A."/>
            <person name="Nixon K."/>
            <person name="Nusskern D.R."/>
            <person name="Pacleb J.M."/>
            <person name="Palazzolo M."/>
            <person name="Pittman G.S."/>
            <person name="Pan S."/>
            <person name="Pollard J."/>
            <person name="Puri V."/>
            <person name="Reese M.G."/>
            <person name="Reinert K."/>
            <person name="Remington K."/>
            <person name="Saunders R.D.C."/>
            <person name="Scheeler F."/>
            <person name="Shen H."/>
            <person name="Shue B.C."/>
            <person name="Siden-Kiamos I."/>
            <person name="Simpson M."/>
            <person name="Skupski M.P."/>
            <person name="Smith T.J."/>
            <person name="Spier E."/>
            <person name="Spradling A.C."/>
            <person name="Stapleton M."/>
            <person name="Strong R."/>
            <person name="Sun E."/>
            <person name="Svirskas R."/>
            <person name="Tector C."/>
            <person name="Turner R."/>
            <person name="Venter E."/>
            <person name="Wang A.H."/>
            <person name="Wang X."/>
            <person name="Wang Z.-Y."/>
            <person name="Wassarman D.A."/>
            <person name="Weinstock G.M."/>
            <person name="Weissenbach J."/>
            <person name="Williams S.M."/>
            <person name="Woodage T."/>
            <person name="Worley K.C."/>
            <person name="Wu D."/>
            <person name="Yang S."/>
            <person name="Yao Q.A."/>
            <person name="Ye J."/>
            <person name="Yeh R.-F."/>
            <person name="Zaveri J.S."/>
            <person name="Zhan M."/>
            <person name="Zhang G."/>
            <person name="Zhao Q."/>
            <person name="Zheng L."/>
            <person name="Zheng X.H."/>
            <person name="Zhong F.N."/>
            <person name="Zhong W."/>
            <person name="Zhou X."/>
            <person name="Zhu S.C."/>
            <person name="Zhu X."/>
            <person name="Smith H.O."/>
            <person name="Gibbs R.A."/>
            <person name="Myers E.W."/>
            <person name="Rubin G.M."/>
            <person name="Venter J.C."/>
        </authorList>
    </citation>
    <scope>NUCLEOTIDE SEQUENCE [LARGE SCALE GENOMIC DNA]</scope>
    <source>
        <strain evidence="13">Berkeley</strain>
    </source>
</reference>
<reference evidence="13" key="2">
    <citation type="journal article" date="2002" name="Genome Biol.">
        <title>Annotation of the Drosophila melanogaster euchromatic genome: a systematic review.</title>
        <authorList>
            <person name="Misra S."/>
            <person name="Crosby M.A."/>
            <person name="Mungall C.J."/>
            <person name="Matthews B.B."/>
            <person name="Campbell K.S."/>
            <person name="Hradecky P."/>
            <person name="Huang Y."/>
            <person name="Kaminker J.S."/>
            <person name="Millburn G.H."/>
            <person name="Prochnik S.E."/>
            <person name="Smith C.D."/>
            <person name="Tupy J.L."/>
            <person name="Whitfield E.J."/>
            <person name="Bayraktaroglu L."/>
            <person name="Berman B.P."/>
            <person name="Bettencourt B.R."/>
            <person name="Celniker S.E."/>
            <person name="de Grey A.D.N.J."/>
            <person name="Drysdale R.A."/>
            <person name="Harris N.L."/>
            <person name="Richter J."/>
            <person name="Russo S."/>
            <person name="Schroeder A.J."/>
            <person name="Shu S.Q."/>
            <person name="Stapleton M."/>
            <person name="Yamada C."/>
            <person name="Ashburner M."/>
            <person name="Gelbart W.M."/>
            <person name="Rubin G.M."/>
            <person name="Lewis S.E."/>
        </authorList>
    </citation>
    <scope>GENOME REANNOTATION</scope>
    <source>
        <strain evidence="13">Berkeley</strain>
    </source>
</reference>
<reference evidence="6" key="3">
    <citation type="journal article" date="2006" name="Genetics">
        <title>Widespread adaptive evolution of Drosophila genes with sex-biased expression.</title>
        <authorList>
            <person name="Proeschel M."/>
            <person name="Zhang Z."/>
            <person name="Parsch J."/>
        </authorList>
    </citation>
    <scope>NUCLEOTIDE SEQUENCE [LARGE SCALE GENOMIC DNA]</scope>
    <source>
        <strain evidence="6">ZBMEL131</strain>
        <strain evidence="7">ZBMEL157</strain>
        <strain evidence="8">ZBMEL191</strain>
        <strain evidence="9">ZBMEL229</strain>
    </source>
</reference>
<reference evidence="10" key="4">
    <citation type="journal article" date="2009" name="Mol. Biol. Evol.">
        <title>The influence of demography and weak selection on the McDonald-Kreitman test: an empirical study in Drosophila.</title>
        <authorList>
            <person name="Parsch J."/>
            <person name="Zhang Z."/>
            <person name="Baines J.F."/>
        </authorList>
    </citation>
    <scope>NUCLEOTIDE SEQUENCE [LARGE SCALE GENOMIC DNA]</scope>
    <source>
        <strain evidence="10">MEL15</strain>
        <strain evidence="11">MEL17</strain>
    </source>
</reference>
<reference evidence="5" key="5">
    <citation type="journal article" date="2002" name="Genome Biol.">
        <title>A Drosophila full-length cDNA resource.</title>
        <authorList>
            <person name="Stapleton M."/>
            <person name="Carlson J.W."/>
            <person name="Brokstein P."/>
            <person name="Yu C."/>
            <person name="Champe M."/>
            <person name="George R.A."/>
            <person name="Guarin H."/>
            <person name="Kronmiller B."/>
            <person name="Pacleb J.M."/>
            <person name="Park S."/>
            <person name="Wan K.H."/>
            <person name="Rubin G.M."/>
            <person name="Celniker S.E."/>
        </authorList>
    </citation>
    <scope>NUCLEOTIDE SEQUENCE [LARGE SCALE MRNA]</scope>
    <source>
        <strain evidence="5">Berkeley</strain>
        <tissue evidence="5">Ovary</tissue>
    </source>
</reference>
<reference evidence="4" key="6">
    <citation type="journal article" date="2023" name="Int. J. Mol. Sci.">
        <title>Genetic Targeting of dSAMTOR, A Negative dTORC1 Regulator, during Drosophila Aging: A Tissue-Specific Pathology.</title>
        <authorList>
            <person name="Katarachia S.A."/>
            <person name="Markaki S.P."/>
            <person name="Velentzas A.D."/>
            <person name="Stravopodis D.J."/>
        </authorList>
    </citation>
    <scope>DISRUPTION PHENOTYPE</scope>
</reference>
<sequence length="331" mass="36682">MEVNQKWNWDTKPILVKCGGFSSQLAKNVTEKVDGDPLWGSRFDATNPEAVIQTHLDFLRNGADIILTNTYQSSVEGFVKYLGVTRERGVELIQKSVQLAKQAKEQYLSEIGSEAESALPLIMGSIGPYGAYLHDGSEYTGNYADKMSKEELRAWHKTRIEICLAAGVDGLALETLPCLMEAEAVTELVLDNFPDAKFWVSLQCMDEKHMASGENFAEAALSLWRLVQSRKAENRLLGIGLNCVNPLFVTPLLSSLTKVAGSDRIPLVVYSNRGEIYDVEQGDWTGTGEEVVKFVPEWIQLGVRIVGGCCRVYPTDVLAIRKYVDGLNIKP</sequence>
<comment type="function">
    <text evidence="1">Involved in the regulation of homocysteine metabolism (By similarity). Converts betaine and homocysteine to dimethylglycine and methionine, respectively (By similarity).</text>
</comment>
<comment type="catalytic activity">
    <reaction evidence="1">
        <text>L-homocysteine + glycine betaine = N,N-dimethylglycine + L-methionine</text>
        <dbReference type="Rhea" id="RHEA:22336"/>
        <dbReference type="ChEBI" id="CHEBI:17750"/>
        <dbReference type="ChEBI" id="CHEBI:57844"/>
        <dbReference type="ChEBI" id="CHEBI:58199"/>
        <dbReference type="ChEBI" id="CHEBI:58251"/>
        <dbReference type="EC" id="2.1.1.5"/>
    </reaction>
    <physiologicalReaction direction="left-to-right" evidence="1">
        <dbReference type="Rhea" id="RHEA:22337"/>
    </physiologicalReaction>
</comment>
<comment type="cofactor">
    <cofactor evidence="2">
        <name>Zn(2+)</name>
        <dbReference type="ChEBI" id="CHEBI:29105"/>
    </cofactor>
</comment>
<comment type="pathway">
    <text evidence="1">Amino-acid biosynthesis; L-methionine biosynthesis via de novo pathway.</text>
</comment>
<comment type="disruption phenotype">
    <text evidence="3">RNAi-mediated tissue specific knockdown in glial cells, motor neurons, muscle cells or the midgut results in reduced adult lifespan (PubMed:37298625). RNAi-mediated knockdown in neuronal tissues or in the midgut results in sex-dependent kinetic pathologies with males suffering reduced locomotor functions while females are unaffected or show increased locomotor function (PubMed:37298625). RNAi-mediated tissue specific knockdown in eye imaginal discs results in progressive loss of eye cilia from 10 days of age onwards (PubMed:37298625). RNAi-mediated tissue specific knockdown in wing imaginal discs results in increased incidence of abnormal wing vein formation (PubMed:37298625).</text>
</comment>
<comment type="similarity">
    <text evidence="4">Belongs to the Betaine-homocysteine S-methyltransferase, BHMT family.</text>
</comment>
<keyword id="KW-0479">Metal-binding</keyword>
<keyword id="KW-0489">Methyltransferase</keyword>
<keyword id="KW-1185">Reference proteome</keyword>
<keyword id="KW-0808">Transferase</keyword>
<keyword id="KW-0862">Zinc</keyword>
<evidence type="ECO:0000250" key="1">
    <source>
        <dbReference type="UniProtKB" id="Q93088"/>
    </source>
</evidence>
<evidence type="ECO:0000255" key="2">
    <source>
        <dbReference type="PROSITE-ProRule" id="PRU00333"/>
    </source>
</evidence>
<evidence type="ECO:0000269" key="3">
    <source>
    </source>
</evidence>
<evidence type="ECO:0000305" key="4"/>
<evidence type="ECO:0000312" key="5">
    <source>
        <dbReference type="EMBL" id="AAM50732.1"/>
    </source>
</evidence>
<evidence type="ECO:0000312" key="6">
    <source>
        <dbReference type="EMBL" id="CAL25775.1"/>
    </source>
</evidence>
<evidence type="ECO:0000312" key="7">
    <source>
        <dbReference type="EMBL" id="CAL25777.1"/>
    </source>
</evidence>
<evidence type="ECO:0000312" key="8">
    <source>
        <dbReference type="EMBL" id="CAL25779.1"/>
    </source>
</evidence>
<evidence type="ECO:0000312" key="9">
    <source>
        <dbReference type="EMBL" id="CAL25780.1"/>
    </source>
</evidence>
<evidence type="ECO:0000312" key="10">
    <source>
        <dbReference type="EMBL" id="CAR93715.1"/>
    </source>
</evidence>
<evidence type="ECO:0000312" key="11">
    <source>
        <dbReference type="EMBL" id="CAR93717.1"/>
    </source>
</evidence>
<evidence type="ECO:0000312" key="12">
    <source>
        <dbReference type="FlyBase" id="FBgn0032727"/>
    </source>
</evidence>
<evidence type="ECO:0000312" key="13">
    <source>
        <dbReference type="Proteomes" id="UP000000803"/>
    </source>
</evidence>
<organism evidence="13">
    <name type="scientific">Drosophila melanogaster</name>
    <name type="common">Fruit fly</name>
    <dbReference type="NCBI Taxonomy" id="7227"/>
    <lineage>
        <taxon>Eukaryota</taxon>
        <taxon>Metazoa</taxon>
        <taxon>Ecdysozoa</taxon>
        <taxon>Arthropoda</taxon>
        <taxon>Hexapoda</taxon>
        <taxon>Insecta</taxon>
        <taxon>Pterygota</taxon>
        <taxon>Neoptera</taxon>
        <taxon>Endopterygota</taxon>
        <taxon>Diptera</taxon>
        <taxon>Brachycera</taxon>
        <taxon>Muscomorpha</taxon>
        <taxon>Ephydroidea</taxon>
        <taxon>Drosophilidae</taxon>
        <taxon>Drosophila</taxon>
        <taxon>Sophophora</taxon>
    </lineage>
</organism>
<name>BHMT_DROME</name>
<gene>
    <name evidence="12" type="primary">Bhmt</name>
    <name evidence="12" type="ORF">CG10623</name>
</gene>